<sequence>MTARAIIIGAPRSGSGKTSVTIGLLRAFARRGVKVRGIKTGPDYIDPGFHAFATGTPGLNLDSWAMQPDLLRHLFSQQTEDAELILIESAMGLFDGIPVAENRTGSAADLARLFRIPVLLVLDVSGQSQTAATIAHGFAHYDPDVTMGAVVLNRAGSERHRTLCTEAIEKIGLPVVGCVLRDPSLILPERHLGLVQASEHPEIDPHIDRLADAMEKSIDLDTLFSLAAPVDMPCGSVAAAIAPPGQRIALAEDAAFTFLYPHLRRHWRAAGAEIVPFSPLADEAPDESCDICWLPGGYPELFAGKLADAVGFKAGITRFAETKPVHGECGGYMVLGERLEDAEGVIHAMTGLLSHATSFATRKMNLGYRQATIAADSPLGMAGDVLRGHEFHYARVIDPGRDQPFAHMADGQGRPLGPSGGRRGFVSGTFFHAIAKGG</sequence>
<reference key="1">
    <citation type="journal article" date="2001" name="Science">
        <title>The genome of the natural genetic engineer Agrobacterium tumefaciens C58.</title>
        <authorList>
            <person name="Wood D.W."/>
            <person name="Setubal J.C."/>
            <person name="Kaul R."/>
            <person name="Monks D.E."/>
            <person name="Kitajima J.P."/>
            <person name="Okura V.K."/>
            <person name="Zhou Y."/>
            <person name="Chen L."/>
            <person name="Wood G.E."/>
            <person name="Almeida N.F. Jr."/>
            <person name="Woo L."/>
            <person name="Chen Y."/>
            <person name="Paulsen I.T."/>
            <person name="Eisen J.A."/>
            <person name="Karp P.D."/>
            <person name="Bovee D. Sr."/>
            <person name="Chapman P."/>
            <person name="Clendenning J."/>
            <person name="Deatherage G."/>
            <person name="Gillet W."/>
            <person name="Grant C."/>
            <person name="Kutyavin T."/>
            <person name="Levy R."/>
            <person name="Li M.-J."/>
            <person name="McClelland E."/>
            <person name="Palmieri A."/>
            <person name="Raymond C."/>
            <person name="Rouse G."/>
            <person name="Saenphimmachak C."/>
            <person name="Wu Z."/>
            <person name="Romero P."/>
            <person name="Gordon D."/>
            <person name="Zhang S."/>
            <person name="Yoo H."/>
            <person name="Tao Y."/>
            <person name="Biddle P."/>
            <person name="Jung M."/>
            <person name="Krespan W."/>
            <person name="Perry M."/>
            <person name="Gordon-Kamm B."/>
            <person name="Liao L."/>
            <person name="Kim S."/>
            <person name="Hendrick C."/>
            <person name="Zhao Z.-Y."/>
            <person name="Dolan M."/>
            <person name="Chumley F."/>
            <person name="Tingey S.V."/>
            <person name="Tomb J.-F."/>
            <person name="Gordon M.P."/>
            <person name="Olson M.V."/>
            <person name="Nester E.W."/>
        </authorList>
    </citation>
    <scope>NUCLEOTIDE SEQUENCE [LARGE SCALE GENOMIC DNA]</scope>
    <source>
        <strain>C58 / ATCC 33970</strain>
    </source>
</reference>
<reference key="2">
    <citation type="journal article" date="2001" name="Science">
        <title>Genome sequence of the plant pathogen and biotechnology agent Agrobacterium tumefaciens C58.</title>
        <authorList>
            <person name="Goodner B."/>
            <person name="Hinkle G."/>
            <person name="Gattung S."/>
            <person name="Miller N."/>
            <person name="Blanchard M."/>
            <person name="Qurollo B."/>
            <person name="Goldman B.S."/>
            <person name="Cao Y."/>
            <person name="Askenazi M."/>
            <person name="Halling C."/>
            <person name="Mullin L."/>
            <person name="Houmiel K."/>
            <person name="Gordon J."/>
            <person name="Vaudin M."/>
            <person name="Iartchouk O."/>
            <person name="Epp A."/>
            <person name="Liu F."/>
            <person name="Wollam C."/>
            <person name="Allinger M."/>
            <person name="Doughty D."/>
            <person name="Scott C."/>
            <person name="Lappas C."/>
            <person name="Markelz B."/>
            <person name="Flanagan C."/>
            <person name="Crowell C."/>
            <person name="Gurson J."/>
            <person name="Lomo C."/>
            <person name="Sear C."/>
            <person name="Strub G."/>
            <person name="Cielo C."/>
            <person name="Slater S."/>
        </authorList>
    </citation>
    <scope>NUCLEOTIDE SEQUENCE [LARGE SCALE GENOMIC DNA]</scope>
    <source>
        <strain>C58 / ATCC 33970</strain>
    </source>
</reference>
<gene>
    <name evidence="1" type="primary">cobB</name>
    <name type="ordered locus">Atu2793</name>
    <name type="ORF">AGR_C_5069</name>
</gene>
<name>COBB_AGRFC</name>
<accession>Q8UBQ8</accession>
<comment type="function">
    <text evidence="1">Catalyzes the ATP-dependent amidation of the two carboxylate groups at positions a and c of hydrogenobyrinate, using either L-glutamine or ammonia as the nitrogen source.</text>
</comment>
<comment type="catalytic activity">
    <reaction evidence="1">
        <text>hydrogenobyrinate + 2 L-glutamine + 2 ATP + 2 H2O = hydrogenobyrinate a,c-diamide + 2 L-glutamate + 2 ADP + 2 phosphate + 2 H(+)</text>
        <dbReference type="Rhea" id="RHEA:12544"/>
        <dbReference type="ChEBI" id="CHEBI:15377"/>
        <dbReference type="ChEBI" id="CHEBI:15378"/>
        <dbReference type="ChEBI" id="CHEBI:29985"/>
        <dbReference type="ChEBI" id="CHEBI:30616"/>
        <dbReference type="ChEBI" id="CHEBI:43474"/>
        <dbReference type="ChEBI" id="CHEBI:58359"/>
        <dbReference type="ChEBI" id="CHEBI:77873"/>
        <dbReference type="ChEBI" id="CHEBI:77874"/>
        <dbReference type="ChEBI" id="CHEBI:456216"/>
        <dbReference type="EC" id="6.3.5.9"/>
    </reaction>
</comment>
<comment type="cofactor">
    <cofactor evidence="1">
        <name>Mg(2+)</name>
        <dbReference type="ChEBI" id="CHEBI:18420"/>
    </cofactor>
</comment>
<comment type="pathway">
    <text evidence="1">Cofactor biosynthesis; adenosylcobalamin biosynthesis; cob(II)yrinate a,c-diamide from precorrin-2 (aerobic route): step 9/10.</text>
</comment>
<comment type="domain">
    <text evidence="1">Comprises of two domains. The C-terminal domain contains the binding site for glutamine and catalyzes the hydrolysis of this substrate to glutamate and ammonia. The N-terminal domain is anticipated to bind ATP and hydrogenobyrinate and catalyzes the ultimate synthesis of the diamide product. The ammonia produced via the glutaminase domain is probably translocated to the adjacent domain via a molecular tunnel, where it reacts with an activated intermediate.</text>
</comment>
<comment type="miscellaneous">
    <text evidence="1">The a and c carboxylates of hydrogenobyrinate are activated for nucleophilic attack via formation of a phosphorylated intermediate by ATP. CobB catalyzes first the amidation of the c-carboxylate, and then that of the a-carboxylate.</text>
</comment>
<comment type="similarity">
    <text evidence="1">Belongs to the CobB/CbiA family.</text>
</comment>
<dbReference type="EC" id="6.3.5.9" evidence="1"/>
<dbReference type="EMBL" id="AE007869">
    <property type="protein sequence ID" value="AAK88506.1"/>
    <property type="molecule type" value="Genomic_DNA"/>
</dbReference>
<dbReference type="PIR" id="A97694">
    <property type="entry name" value="A97694"/>
</dbReference>
<dbReference type="PIR" id="AH2919">
    <property type="entry name" value="AH2919"/>
</dbReference>
<dbReference type="RefSeq" id="NP_355721.1">
    <property type="nucleotide sequence ID" value="NC_003062.2"/>
</dbReference>
<dbReference type="RefSeq" id="WP_010972568.1">
    <property type="nucleotide sequence ID" value="NC_003062.2"/>
</dbReference>
<dbReference type="SMR" id="Q8UBQ8"/>
<dbReference type="STRING" id="176299.Atu2793"/>
<dbReference type="EnsemblBacteria" id="AAK88506">
    <property type="protein sequence ID" value="AAK88506"/>
    <property type="gene ID" value="Atu2793"/>
</dbReference>
<dbReference type="GeneID" id="1134831"/>
<dbReference type="KEGG" id="atu:Atu2793"/>
<dbReference type="PATRIC" id="fig|176299.10.peg.2803"/>
<dbReference type="eggNOG" id="COG1797">
    <property type="taxonomic scope" value="Bacteria"/>
</dbReference>
<dbReference type="HOGENOM" id="CLU_022752_0_0_5"/>
<dbReference type="OrthoDB" id="9764035at2"/>
<dbReference type="PhylomeDB" id="Q8UBQ8"/>
<dbReference type="BioCyc" id="AGRO:ATU2793-MONOMER"/>
<dbReference type="UniPathway" id="UPA00148">
    <property type="reaction ID" value="UER00220"/>
</dbReference>
<dbReference type="Proteomes" id="UP000000813">
    <property type="component" value="Chromosome circular"/>
</dbReference>
<dbReference type="GO" id="GO:0005524">
    <property type="term" value="F:ATP binding"/>
    <property type="evidence" value="ECO:0007669"/>
    <property type="project" value="UniProtKB-UniRule"/>
</dbReference>
<dbReference type="GO" id="GO:0042242">
    <property type="term" value="F:cobyrinic acid a,c-diamide synthase activity"/>
    <property type="evidence" value="ECO:0007669"/>
    <property type="project" value="InterPro"/>
</dbReference>
<dbReference type="GO" id="GO:0043802">
    <property type="term" value="F:hydrogenobyrinic acid a,c-diamide synthase (glutamine-hydrolysing) activity"/>
    <property type="evidence" value="ECO:0007669"/>
    <property type="project" value="UniProtKB-UniRule"/>
</dbReference>
<dbReference type="GO" id="GO:0009236">
    <property type="term" value="P:cobalamin biosynthetic process"/>
    <property type="evidence" value="ECO:0007669"/>
    <property type="project" value="UniProtKB-UniRule"/>
</dbReference>
<dbReference type="CDD" id="cd05388">
    <property type="entry name" value="CobB_N"/>
    <property type="match status" value="1"/>
</dbReference>
<dbReference type="Gene3D" id="3.40.50.880">
    <property type="match status" value="1"/>
</dbReference>
<dbReference type="Gene3D" id="3.40.50.300">
    <property type="entry name" value="P-loop containing nucleotide triphosphate hydrolases"/>
    <property type="match status" value="1"/>
</dbReference>
<dbReference type="HAMAP" id="MF_00027">
    <property type="entry name" value="CobB_CbiA"/>
    <property type="match status" value="1"/>
</dbReference>
<dbReference type="InterPro" id="IPR004484">
    <property type="entry name" value="CbiA/CobB_synth"/>
</dbReference>
<dbReference type="InterPro" id="IPR029062">
    <property type="entry name" value="Class_I_gatase-like"/>
</dbReference>
<dbReference type="InterPro" id="IPR002586">
    <property type="entry name" value="CobQ/CobB/MinD/ParA_Nub-bd_dom"/>
</dbReference>
<dbReference type="InterPro" id="IPR011698">
    <property type="entry name" value="GATase_3"/>
</dbReference>
<dbReference type="InterPro" id="IPR027417">
    <property type="entry name" value="P-loop_NTPase"/>
</dbReference>
<dbReference type="NCBIfam" id="TIGR00379">
    <property type="entry name" value="cobB"/>
    <property type="match status" value="1"/>
</dbReference>
<dbReference type="NCBIfam" id="NF002204">
    <property type="entry name" value="PRK01077.1"/>
    <property type="match status" value="1"/>
</dbReference>
<dbReference type="PANTHER" id="PTHR43873">
    <property type="entry name" value="COBYRINATE A,C-DIAMIDE SYNTHASE"/>
    <property type="match status" value="1"/>
</dbReference>
<dbReference type="PANTHER" id="PTHR43873:SF1">
    <property type="entry name" value="COBYRINATE A,C-DIAMIDE SYNTHASE"/>
    <property type="match status" value="1"/>
</dbReference>
<dbReference type="Pfam" id="PF01656">
    <property type="entry name" value="CbiA"/>
    <property type="match status" value="1"/>
</dbReference>
<dbReference type="Pfam" id="PF07685">
    <property type="entry name" value="GATase_3"/>
    <property type="match status" value="1"/>
</dbReference>
<dbReference type="SUPFAM" id="SSF52317">
    <property type="entry name" value="Class I glutamine amidotransferase-like"/>
    <property type="match status" value="1"/>
</dbReference>
<dbReference type="SUPFAM" id="SSF52540">
    <property type="entry name" value="P-loop containing nucleoside triphosphate hydrolases"/>
    <property type="match status" value="1"/>
</dbReference>
<dbReference type="PROSITE" id="PS51274">
    <property type="entry name" value="GATASE_COBBQ"/>
    <property type="match status" value="1"/>
</dbReference>
<evidence type="ECO:0000255" key="1">
    <source>
        <dbReference type="HAMAP-Rule" id="MF_00027"/>
    </source>
</evidence>
<protein>
    <recommendedName>
        <fullName evidence="1">Hydrogenobyrinate a,c-diamide synthase</fullName>
        <ecNumber evidence="1">6.3.5.9</ecNumber>
    </recommendedName>
    <alternativeName>
        <fullName evidence="1">Hydrogenobyrinic acid a,c-diamide synthase</fullName>
    </alternativeName>
</protein>
<keyword id="KW-0067">ATP-binding</keyword>
<keyword id="KW-0169">Cobalamin biosynthesis</keyword>
<keyword id="KW-0315">Glutamine amidotransferase</keyword>
<keyword id="KW-0436">Ligase</keyword>
<keyword id="KW-0460">Magnesium</keyword>
<keyword id="KW-0547">Nucleotide-binding</keyword>
<keyword id="KW-1185">Reference proteome</keyword>
<organism>
    <name type="scientific">Agrobacterium fabrum (strain C58 / ATCC 33970)</name>
    <name type="common">Agrobacterium tumefaciens (strain C58)</name>
    <dbReference type="NCBI Taxonomy" id="176299"/>
    <lineage>
        <taxon>Bacteria</taxon>
        <taxon>Pseudomonadati</taxon>
        <taxon>Pseudomonadota</taxon>
        <taxon>Alphaproteobacteria</taxon>
        <taxon>Hyphomicrobiales</taxon>
        <taxon>Rhizobiaceae</taxon>
        <taxon>Rhizobium/Agrobacterium group</taxon>
        <taxon>Agrobacterium</taxon>
        <taxon>Agrobacterium tumefaciens complex</taxon>
    </lineage>
</organism>
<feature type="chain" id="PRO_0000141252" description="Hydrogenobyrinate a,c-diamide synthase">
    <location>
        <begin position="1"/>
        <end position="438"/>
    </location>
</feature>
<feature type="domain" description="GATase cobBQ-type" evidence="1">
    <location>
        <begin position="247"/>
        <end position="438"/>
    </location>
</feature>
<feature type="active site" description="Nucleophile" evidence="1">
    <location>
        <position position="329"/>
    </location>
</feature>
<feature type="site" description="Increases nucleophilicity of active site Cys" evidence="1">
    <location>
        <position position="432"/>
    </location>
</feature>
<proteinExistence type="inferred from homology"/>